<organism>
    <name type="scientific">Beijerinckia indica subsp. indica (strain ATCC 9039 / DSM 1715 / NCIMB 8712)</name>
    <dbReference type="NCBI Taxonomy" id="395963"/>
    <lineage>
        <taxon>Bacteria</taxon>
        <taxon>Pseudomonadati</taxon>
        <taxon>Pseudomonadota</taxon>
        <taxon>Alphaproteobacteria</taxon>
        <taxon>Hyphomicrobiales</taxon>
        <taxon>Beijerinckiaceae</taxon>
        <taxon>Beijerinckia</taxon>
    </lineage>
</organism>
<dbReference type="EC" id="3.5.1.18" evidence="1"/>
<dbReference type="EMBL" id="CP001016">
    <property type="protein sequence ID" value="ACB96895.1"/>
    <property type="molecule type" value="Genomic_DNA"/>
</dbReference>
<dbReference type="RefSeq" id="WP_012386243.1">
    <property type="nucleotide sequence ID" value="NC_010581.1"/>
</dbReference>
<dbReference type="SMR" id="B2IDW3"/>
<dbReference type="STRING" id="395963.Bind_3336"/>
<dbReference type="KEGG" id="bid:Bind_3336"/>
<dbReference type="eggNOG" id="COG0624">
    <property type="taxonomic scope" value="Bacteria"/>
</dbReference>
<dbReference type="HOGENOM" id="CLU_021802_4_0_5"/>
<dbReference type="OrthoDB" id="9809784at2"/>
<dbReference type="UniPathway" id="UPA00034">
    <property type="reaction ID" value="UER00021"/>
</dbReference>
<dbReference type="Proteomes" id="UP000001695">
    <property type="component" value="Chromosome"/>
</dbReference>
<dbReference type="GO" id="GO:0008777">
    <property type="term" value="F:acetylornithine deacetylase activity"/>
    <property type="evidence" value="ECO:0007669"/>
    <property type="project" value="TreeGrafter"/>
</dbReference>
<dbReference type="GO" id="GO:0050897">
    <property type="term" value="F:cobalt ion binding"/>
    <property type="evidence" value="ECO:0007669"/>
    <property type="project" value="UniProtKB-UniRule"/>
</dbReference>
<dbReference type="GO" id="GO:0009014">
    <property type="term" value="F:succinyl-diaminopimelate desuccinylase activity"/>
    <property type="evidence" value="ECO:0007669"/>
    <property type="project" value="UniProtKB-UniRule"/>
</dbReference>
<dbReference type="GO" id="GO:0008270">
    <property type="term" value="F:zinc ion binding"/>
    <property type="evidence" value="ECO:0007669"/>
    <property type="project" value="UniProtKB-UniRule"/>
</dbReference>
<dbReference type="GO" id="GO:0019877">
    <property type="term" value="P:diaminopimelate biosynthetic process"/>
    <property type="evidence" value="ECO:0007669"/>
    <property type="project" value="UniProtKB-UniRule"/>
</dbReference>
<dbReference type="GO" id="GO:0006526">
    <property type="term" value="P:L-arginine biosynthetic process"/>
    <property type="evidence" value="ECO:0007669"/>
    <property type="project" value="TreeGrafter"/>
</dbReference>
<dbReference type="GO" id="GO:0009089">
    <property type="term" value="P:lysine biosynthetic process via diaminopimelate"/>
    <property type="evidence" value="ECO:0007669"/>
    <property type="project" value="UniProtKB-UniRule"/>
</dbReference>
<dbReference type="CDD" id="cd03891">
    <property type="entry name" value="M20_DapE_proteobac"/>
    <property type="match status" value="1"/>
</dbReference>
<dbReference type="Gene3D" id="3.40.630.10">
    <property type="entry name" value="Zn peptidases"/>
    <property type="match status" value="2"/>
</dbReference>
<dbReference type="HAMAP" id="MF_01690">
    <property type="entry name" value="DapE"/>
    <property type="match status" value="1"/>
</dbReference>
<dbReference type="InterPro" id="IPR001261">
    <property type="entry name" value="ArgE/DapE_CS"/>
</dbReference>
<dbReference type="InterPro" id="IPR036264">
    <property type="entry name" value="Bact_exopeptidase_dim_dom"/>
</dbReference>
<dbReference type="InterPro" id="IPR005941">
    <property type="entry name" value="DapE_proteobac"/>
</dbReference>
<dbReference type="InterPro" id="IPR002933">
    <property type="entry name" value="Peptidase_M20"/>
</dbReference>
<dbReference type="InterPro" id="IPR011650">
    <property type="entry name" value="Peptidase_M20_dimer"/>
</dbReference>
<dbReference type="InterPro" id="IPR050072">
    <property type="entry name" value="Peptidase_M20A"/>
</dbReference>
<dbReference type="NCBIfam" id="TIGR01246">
    <property type="entry name" value="dapE_proteo"/>
    <property type="match status" value="1"/>
</dbReference>
<dbReference type="NCBIfam" id="NF009557">
    <property type="entry name" value="PRK13009.1"/>
    <property type="match status" value="1"/>
</dbReference>
<dbReference type="PANTHER" id="PTHR43808">
    <property type="entry name" value="ACETYLORNITHINE DEACETYLASE"/>
    <property type="match status" value="1"/>
</dbReference>
<dbReference type="PANTHER" id="PTHR43808:SF31">
    <property type="entry name" value="N-ACETYL-L-CITRULLINE DEACETYLASE"/>
    <property type="match status" value="1"/>
</dbReference>
<dbReference type="Pfam" id="PF07687">
    <property type="entry name" value="M20_dimer"/>
    <property type="match status" value="1"/>
</dbReference>
<dbReference type="Pfam" id="PF01546">
    <property type="entry name" value="Peptidase_M20"/>
    <property type="match status" value="1"/>
</dbReference>
<dbReference type="SUPFAM" id="SSF55031">
    <property type="entry name" value="Bacterial exopeptidase dimerisation domain"/>
    <property type="match status" value="1"/>
</dbReference>
<dbReference type="SUPFAM" id="SSF53187">
    <property type="entry name" value="Zn-dependent exopeptidases"/>
    <property type="match status" value="1"/>
</dbReference>
<dbReference type="PROSITE" id="PS00759">
    <property type="entry name" value="ARGE_DAPE_CPG2_2"/>
    <property type="match status" value="1"/>
</dbReference>
<comment type="function">
    <text evidence="1">Catalyzes the hydrolysis of N-succinyl-L,L-diaminopimelic acid (SDAP), forming succinate and LL-2,6-diaminopimelate (DAP), an intermediate involved in the bacterial biosynthesis of lysine and meso-diaminopimelic acid, an essential component of bacterial cell walls.</text>
</comment>
<comment type="catalytic activity">
    <reaction evidence="1">
        <text>N-succinyl-(2S,6S)-2,6-diaminopimelate + H2O = (2S,6S)-2,6-diaminopimelate + succinate</text>
        <dbReference type="Rhea" id="RHEA:22608"/>
        <dbReference type="ChEBI" id="CHEBI:15377"/>
        <dbReference type="ChEBI" id="CHEBI:30031"/>
        <dbReference type="ChEBI" id="CHEBI:57609"/>
        <dbReference type="ChEBI" id="CHEBI:58087"/>
        <dbReference type="EC" id="3.5.1.18"/>
    </reaction>
</comment>
<comment type="cofactor">
    <cofactor evidence="1">
        <name>Zn(2+)</name>
        <dbReference type="ChEBI" id="CHEBI:29105"/>
    </cofactor>
    <cofactor evidence="1">
        <name>Co(2+)</name>
        <dbReference type="ChEBI" id="CHEBI:48828"/>
    </cofactor>
    <text evidence="1">Binds 2 Zn(2+) or Co(2+) ions per subunit.</text>
</comment>
<comment type="pathway">
    <text evidence="1">Amino-acid biosynthesis; L-lysine biosynthesis via DAP pathway; LL-2,6-diaminopimelate from (S)-tetrahydrodipicolinate (succinylase route): step 3/3.</text>
</comment>
<comment type="subunit">
    <text evidence="1">Homodimer.</text>
</comment>
<comment type="similarity">
    <text evidence="1">Belongs to the peptidase M20A family. DapE subfamily.</text>
</comment>
<name>DAPE_BEII9</name>
<reference key="1">
    <citation type="journal article" date="2010" name="J. Bacteriol.">
        <title>Complete genome sequence of Beijerinckia indica subsp. indica.</title>
        <authorList>
            <person name="Tamas I."/>
            <person name="Dedysh S.N."/>
            <person name="Liesack W."/>
            <person name="Stott M.B."/>
            <person name="Alam M."/>
            <person name="Murrell J.C."/>
            <person name="Dunfield P.F."/>
        </authorList>
    </citation>
    <scope>NUCLEOTIDE SEQUENCE [LARGE SCALE GENOMIC DNA]</scope>
    <source>
        <strain>ATCC 9039 / DSM 1715 / NCIMB 8712</strain>
    </source>
</reference>
<proteinExistence type="inferred from homology"/>
<accession>B2IDW3</accession>
<feature type="chain" id="PRO_0000375473" description="Succinyl-diaminopimelate desuccinylase">
    <location>
        <begin position="1"/>
        <end position="383"/>
    </location>
</feature>
<feature type="active site" evidence="1">
    <location>
        <position position="74"/>
    </location>
</feature>
<feature type="active site" description="Proton acceptor" evidence="1">
    <location>
        <position position="139"/>
    </location>
</feature>
<feature type="binding site" evidence="1">
    <location>
        <position position="72"/>
    </location>
    <ligand>
        <name>Zn(2+)</name>
        <dbReference type="ChEBI" id="CHEBI:29105"/>
        <label>1</label>
    </ligand>
</feature>
<feature type="binding site" evidence="1">
    <location>
        <position position="105"/>
    </location>
    <ligand>
        <name>Zn(2+)</name>
        <dbReference type="ChEBI" id="CHEBI:29105"/>
        <label>1</label>
    </ligand>
</feature>
<feature type="binding site" evidence="1">
    <location>
        <position position="105"/>
    </location>
    <ligand>
        <name>Zn(2+)</name>
        <dbReference type="ChEBI" id="CHEBI:29105"/>
        <label>2</label>
    </ligand>
</feature>
<feature type="binding site" evidence="1">
    <location>
        <position position="140"/>
    </location>
    <ligand>
        <name>Zn(2+)</name>
        <dbReference type="ChEBI" id="CHEBI:29105"/>
        <label>2</label>
    </ligand>
</feature>
<feature type="binding site" evidence="1">
    <location>
        <position position="168"/>
    </location>
    <ligand>
        <name>Zn(2+)</name>
        <dbReference type="ChEBI" id="CHEBI:29105"/>
        <label>1</label>
    </ligand>
</feature>
<feature type="binding site" evidence="1">
    <location>
        <position position="356"/>
    </location>
    <ligand>
        <name>Zn(2+)</name>
        <dbReference type="ChEBI" id="CHEBI:29105"/>
        <label>2</label>
    </ligand>
</feature>
<keyword id="KW-0028">Amino-acid biosynthesis</keyword>
<keyword id="KW-0170">Cobalt</keyword>
<keyword id="KW-0220">Diaminopimelate biosynthesis</keyword>
<keyword id="KW-0378">Hydrolase</keyword>
<keyword id="KW-0457">Lysine biosynthesis</keyword>
<keyword id="KW-0479">Metal-binding</keyword>
<keyword id="KW-1185">Reference proteome</keyword>
<keyword id="KW-0862">Zinc</keyword>
<sequence length="383" mass="41344">MSETALDLARALISCPSVTPQDGGTLGVLESRLKASGFRTHRLTFHEEGTPDIDNLYARFGSGAPCLVFAGHTDVVPVGTATDWRFDPFAAKVEDGQLWGRGAADMKGAIAAFTAAALTFIEQHKDFKGSIAFLITGDEEGPSINGTIKLLKWAAEQGEHFDHCIVGEPTNPQVLGDMIKIGRRGSLNGILSITGKQGHVAYPHRADNPVPKLMRLIEALIGTPLDEGTDHFDASNLEVVALSSGTDAYNVIPAKAEARFNIRFNDLWTPQTLELELLARLDSVAEGTAYTLTFEPCNALAFITKPDQFTDLVANAIEKQTGRRPELSTTGGTSDARFISAYCPVVEFGLVGQTMHMVDERVSVADIATLETIYTSILEGYFP</sequence>
<evidence type="ECO:0000255" key="1">
    <source>
        <dbReference type="HAMAP-Rule" id="MF_01690"/>
    </source>
</evidence>
<protein>
    <recommendedName>
        <fullName evidence="1">Succinyl-diaminopimelate desuccinylase</fullName>
        <shortName evidence="1">SDAP desuccinylase</shortName>
        <ecNumber evidence="1">3.5.1.18</ecNumber>
    </recommendedName>
    <alternativeName>
        <fullName evidence="1">N-succinyl-LL-2,6-diaminoheptanedioate amidohydrolase</fullName>
    </alternativeName>
</protein>
<gene>
    <name evidence="1" type="primary">dapE</name>
    <name type="ordered locus">Bind_3336</name>
</gene>